<gene>
    <name type="primary">efp2</name>
    <name type="ordered locus">CPn_0895</name>
    <name type="ordered locus">CP_0971</name>
    <name type="ordered locus">CpB0926</name>
</gene>
<organism>
    <name type="scientific">Chlamydia pneumoniae</name>
    <name type="common">Chlamydophila pneumoniae</name>
    <dbReference type="NCBI Taxonomy" id="83558"/>
    <lineage>
        <taxon>Bacteria</taxon>
        <taxon>Pseudomonadati</taxon>
        <taxon>Chlamydiota</taxon>
        <taxon>Chlamydiia</taxon>
        <taxon>Chlamydiales</taxon>
        <taxon>Chlamydiaceae</taxon>
        <taxon>Chlamydia/Chlamydophila group</taxon>
        <taxon>Chlamydia</taxon>
    </lineage>
</organism>
<proteinExistence type="inferred from homology"/>
<reference key="1">
    <citation type="journal article" date="1999" name="Nat. Genet.">
        <title>Comparative genomes of Chlamydia pneumoniae and C. trachomatis.</title>
        <authorList>
            <person name="Kalman S."/>
            <person name="Mitchell W.P."/>
            <person name="Marathe R."/>
            <person name="Lammel C.J."/>
            <person name="Fan J."/>
            <person name="Hyman R.W."/>
            <person name="Olinger L."/>
            <person name="Grimwood J."/>
            <person name="Davis R.W."/>
            <person name="Stephens R.S."/>
        </authorList>
    </citation>
    <scope>NUCLEOTIDE SEQUENCE [LARGE SCALE GENOMIC DNA]</scope>
    <source>
        <strain>CWL029</strain>
    </source>
</reference>
<reference key="2">
    <citation type="journal article" date="2000" name="Nucleic Acids Res.">
        <title>Genome sequences of Chlamydia trachomatis MoPn and Chlamydia pneumoniae AR39.</title>
        <authorList>
            <person name="Read T.D."/>
            <person name="Brunham R.C."/>
            <person name="Shen C."/>
            <person name="Gill S.R."/>
            <person name="Heidelberg J.F."/>
            <person name="White O."/>
            <person name="Hickey E.K."/>
            <person name="Peterson J.D."/>
            <person name="Utterback T.R."/>
            <person name="Berry K.J."/>
            <person name="Bass S."/>
            <person name="Linher K.D."/>
            <person name="Weidman J.F."/>
            <person name="Khouri H.M."/>
            <person name="Craven B."/>
            <person name="Bowman C."/>
            <person name="Dodson R.J."/>
            <person name="Gwinn M.L."/>
            <person name="Nelson W.C."/>
            <person name="DeBoy R.T."/>
            <person name="Kolonay J.F."/>
            <person name="McClarty G."/>
            <person name="Salzberg S.L."/>
            <person name="Eisen J.A."/>
            <person name="Fraser C.M."/>
        </authorList>
    </citation>
    <scope>NUCLEOTIDE SEQUENCE [LARGE SCALE GENOMIC DNA]</scope>
    <source>
        <strain>AR39</strain>
    </source>
</reference>
<reference key="3">
    <citation type="journal article" date="2000" name="Nucleic Acids Res.">
        <title>Comparison of whole genome sequences of Chlamydia pneumoniae J138 from Japan and CWL029 from USA.</title>
        <authorList>
            <person name="Shirai M."/>
            <person name="Hirakawa H."/>
            <person name="Kimoto M."/>
            <person name="Tabuchi M."/>
            <person name="Kishi F."/>
            <person name="Ouchi K."/>
            <person name="Shiba T."/>
            <person name="Ishii K."/>
            <person name="Hattori M."/>
            <person name="Kuhara S."/>
            <person name="Nakazawa T."/>
        </authorList>
    </citation>
    <scope>NUCLEOTIDE SEQUENCE [LARGE SCALE GENOMIC DNA]</scope>
    <source>
        <strain>J138</strain>
    </source>
</reference>
<reference key="4">
    <citation type="submission" date="2002-05" db="EMBL/GenBank/DDBJ databases">
        <title>The genome sequence of Chlamydia pneumoniae TW183 and comparison with other Chlamydia strains based on whole genome sequence analysis.</title>
        <authorList>
            <person name="Geng M.M."/>
            <person name="Schuhmacher A."/>
            <person name="Muehldorfer I."/>
            <person name="Bensch K.W."/>
            <person name="Schaefer K.P."/>
            <person name="Schneider S."/>
            <person name="Pohl T."/>
            <person name="Essig A."/>
            <person name="Marre R."/>
            <person name="Melchers K."/>
        </authorList>
    </citation>
    <scope>NUCLEOTIDE SEQUENCE [LARGE SCALE GENOMIC DNA]</scope>
    <source>
        <strain>TW-183</strain>
    </source>
</reference>
<sequence>MVRVSTSEFRVGLRIEIDGQPYLILQNDFVKPGKGQAFNRIKVKNFLTGRVIERTYKSGESVETADIVERSMRLLYTDQEGATFMDDETFEQEVVFWEKLENIRQWLLEDTIYTLVLYNGDVVAVEPPIFMELSIAETAPGVRGDTASGRVLKPAVTNTGAKIMVPIFIDEGELVKVDTRTGSYESRVSK</sequence>
<evidence type="ECO:0000250" key="1"/>
<evidence type="ECO:0000305" key="2"/>
<dbReference type="EMBL" id="AE001363">
    <property type="protein sequence ID" value="AAD19033.1"/>
    <property type="molecule type" value="Genomic_DNA"/>
</dbReference>
<dbReference type="EMBL" id="AE002161">
    <property type="protein sequence ID" value="AAF38751.1"/>
    <property type="molecule type" value="Genomic_DNA"/>
</dbReference>
<dbReference type="EMBL" id="BA000008">
    <property type="protein sequence ID" value="BAA99103.1"/>
    <property type="molecule type" value="Genomic_DNA"/>
</dbReference>
<dbReference type="EMBL" id="AE009440">
    <property type="protein sequence ID" value="AAP98855.1"/>
    <property type="molecule type" value="Genomic_DNA"/>
</dbReference>
<dbReference type="PIR" id="B72021">
    <property type="entry name" value="B72021"/>
</dbReference>
<dbReference type="PIR" id="E86602">
    <property type="entry name" value="E86602"/>
</dbReference>
<dbReference type="RefSeq" id="NP_225090.1">
    <property type="nucleotide sequence ID" value="NC_000922.1"/>
</dbReference>
<dbReference type="SMR" id="Q9Z711"/>
<dbReference type="STRING" id="406984.CPK_ORF00307"/>
<dbReference type="GeneID" id="45050950"/>
<dbReference type="KEGG" id="cpa:CP_0971"/>
<dbReference type="KEGG" id="cpj:efp_2"/>
<dbReference type="KEGG" id="cpn:CPn_0895"/>
<dbReference type="KEGG" id="cpt:CpB0926"/>
<dbReference type="PATRIC" id="fig|115713.3.peg.976"/>
<dbReference type="eggNOG" id="COG0231">
    <property type="taxonomic scope" value="Bacteria"/>
</dbReference>
<dbReference type="HOGENOM" id="CLU_074944_0_0_0"/>
<dbReference type="OMA" id="WSVVEFQ"/>
<dbReference type="OrthoDB" id="9801844at2"/>
<dbReference type="UniPathway" id="UPA00345"/>
<dbReference type="Proteomes" id="UP000000583">
    <property type="component" value="Chromosome"/>
</dbReference>
<dbReference type="Proteomes" id="UP000000801">
    <property type="component" value="Chromosome"/>
</dbReference>
<dbReference type="GO" id="GO:0005737">
    <property type="term" value="C:cytoplasm"/>
    <property type="evidence" value="ECO:0007669"/>
    <property type="project" value="UniProtKB-SubCell"/>
</dbReference>
<dbReference type="GO" id="GO:0003746">
    <property type="term" value="F:translation elongation factor activity"/>
    <property type="evidence" value="ECO:0007669"/>
    <property type="project" value="UniProtKB-UniRule"/>
</dbReference>
<dbReference type="GO" id="GO:0043043">
    <property type="term" value="P:peptide biosynthetic process"/>
    <property type="evidence" value="ECO:0007669"/>
    <property type="project" value="InterPro"/>
</dbReference>
<dbReference type="CDD" id="cd04470">
    <property type="entry name" value="S1_EF-P_repeat_1"/>
    <property type="match status" value="1"/>
</dbReference>
<dbReference type="CDD" id="cd05794">
    <property type="entry name" value="S1_EF-P_repeat_2"/>
    <property type="match status" value="1"/>
</dbReference>
<dbReference type="FunFam" id="2.30.30.30:FF:000003">
    <property type="entry name" value="Elongation factor P"/>
    <property type="match status" value="1"/>
</dbReference>
<dbReference type="FunFam" id="2.40.50.140:FF:000004">
    <property type="entry name" value="Elongation factor P"/>
    <property type="match status" value="1"/>
</dbReference>
<dbReference type="FunFam" id="2.40.50.140:FF:000009">
    <property type="entry name" value="Elongation factor P"/>
    <property type="match status" value="1"/>
</dbReference>
<dbReference type="Gene3D" id="2.30.30.30">
    <property type="match status" value="1"/>
</dbReference>
<dbReference type="Gene3D" id="2.40.50.140">
    <property type="entry name" value="Nucleic acid-binding proteins"/>
    <property type="match status" value="2"/>
</dbReference>
<dbReference type="HAMAP" id="MF_00141">
    <property type="entry name" value="EF_P"/>
    <property type="match status" value="1"/>
</dbReference>
<dbReference type="InterPro" id="IPR015365">
    <property type="entry name" value="Elong-fact-P_C"/>
</dbReference>
<dbReference type="InterPro" id="IPR012340">
    <property type="entry name" value="NA-bd_OB-fold"/>
</dbReference>
<dbReference type="InterPro" id="IPR014722">
    <property type="entry name" value="Rib_uL2_dom2"/>
</dbReference>
<dbReference type="InterPro" id="IPR020599">
    <property type="entry name" value="Transl_elong_fac_P/YeiP"/>
</dbReference>
<dbReference type="InterPro" id="IPR013185">
    <property type="entry name" value="Transl_elong_KOW-like"/>
</dbReference>
<dbReference type="InterPro" id="IPR001059">
    <property type="entry name" value="Transl_elong_P/YeiP_cen"/>
</dbReference>
<dbReference type="InterPro" id="IPR013852">
    <property type="entry name" value="Transl_elong_P/YeiP_CS"/>
</dbReference>
<dbReference type="InterPro" id="IPR011768">
    <property type="entry name" value="Transl_elongation_fac_P"/>
</dbReference>
<dbReference type="InterPro" id="IPR008991">
    <property type="entry name" value="Translation_prot_SH3-like_sf"/>
</dbReference>
<dbReference type="NCBIfam" id="TIGR00038">
    <property type="entry name" value="efp"/>
    <property type="match status" value="1"/>
</dbReference>
<dbReference type="NCBIfam" id="NF001810">
    <property type="entry name" value="PRK00529.1"/>
    <property type="match status" value="1"/>
</dbReference>
<dbReference type="PANTHER" id="PTHR30053">
    <property type="entry name" value="ELONGATION FACTOR P"/>
    <property type="match status" value="1"/>
</dbReference>
<dbReference type="PANTHER" id="PTHR30053:SF12">
    <property type="entry name" value="ELONGATION FACTOR P (EF-P) FAMILY PROTEIN"/>
    <property type="match status" value="1"/>
</dbReference>
<dbReference type="Pfam" id="PF01132">
    <property type="entry name" value="EFP"/>
    <property type="match status" value="1"/>
</dbReference>
<dbReference type="Pfam" id="PF08207">
    <property type="entry name" value="EFP_N"/>
    <property type="match status" value="1"/>
</dbReference>
<dbReference type="Pfam" id="PF09285">
    <property type="entry name" value="Elong-fact-P_C"/>
    <property type="match status" value="1"/>
</dbReference>
<dbReference type="PIRSF" id="PIRSF005901">
    <property type="entry name" value="EF-P"/>
    <property type="match status" value="1"/>
</dbReference>
<dbReference type="SMART" id="SM01185">
    <property type="entry name" value="EFP"/>
    <property type="match status" value="1"/>
</dbReference>
<dbReference type="SMART" id="SM00841">
    <property type="entry name" value="Elong-fact-P_C"/>
    <property type="match status" value="1"/>
</dbReference>
<dbReference type="SUPFAM" id="SSF50249">
    <property type="entry name" value="Nucleic acid-binding proteins"/>
    <property type="match status" value="2"/>
</dbReference>
<dbReference type="SUPFAM" id="SSF50104">
    <property type="entry name" value="Translation proteins SH3-like domain"/>
    <property type="match status" value="1"/>
</dbReference>
<dbReference type="PROSITE" id="PS01275">
    <property type="entry name" value="EFP"/>
    <property type="match status" value="1"/>
</dbReference>
<comment type="function">
    <text evidence="1">Involved in peptide bond synthesis. Stimulates efficient translation and peptide-bond synthesis on native or reconstituted 70S ribosomes in vitro. Probably functions indirectly by altering the affinity of the ribosome for aminoacyl-tRNA, thus increasing their reactivity as acceptors for peptidyl transferase (By similarity).</text>
</comment>
<comment type="pathway">
    <text>Protein biosynthesis; polypeptide chain elongation.</text>
</comment>
<comment type="subcellular location">
    <subcellularLocation>
        <location evidence="1">Cytoplasm</location>
    </subcellularLocation>
</comment>
<comment type="similarity">
    <text evidence="2">Belongs to the elongation factor P family.</text>
</comment>
<accession>Q9Z711</accession>
<accession>Q9JQB4</accession>
<keyword id="KW-0963">Cytoplasm</keyword>
<keyword id="KW-0251">Elongation factor</keyword>
<keyword id="KW-0648">Protein biosynthesis</keyword>
<feature type="chain" id="PRO_0000094230" description="Elongation factor P 2">
    <location>
        <begin position="1"/>
        <end position="190"/>
    </location>
</feature>
<protein>
    <recommendedName>
        <fullName>Elongation factor P 2</fullName>
        <shortName>EF-P 2</shortName>
    </recommendedName>
</protein>
<name>EFP2_CHLPN</name>